<proteinExistence type="inferred from homology"/>
<name>CINA_BACAC</name>
<gene>
    <name evidence="1" type="primary">cinA</name>
    <name type="ordered locus">BAMEG_0714</name>
</gene>
<dbReference type="EMBL" id="CP001215">
    <property type="protein sequence ID" value="ACP17534.1"/>
    <property type="molecule type" value="Genomic_DNA"/>
</dbReference>
<dbReference type="RefSeq" id="WP_000990715.1">
    <property type="nucleotide sequence ID" value="NC_012581.1"/>
</dbReference>
<dbReference type="SMR" id="C3L7E6"/>
<dbReference type="GeneID" id="45023610"/>
<dbReference type="KEGG" id="bah:BAMEG_0714"/>
<dbReference type="HOGENOM" id="CLU_030805_9_3_9"/>
<dbReference type="CDD" id="cd00885">
    <property type="entry name" value="cinA"/>
    <property type="match status" value="1"/>
</dbReference>
<dbReference type="Gene3D" id="3.30.70.2860">
    <property type="match status" value="1"/>
</dbReference>
<dbReference type="Gene3D" id="3.90.950.20">
    <property type="entry name" value="CinA-like"/>
    <property type="match status" value="1"/>
</dbReference>
<dbReference type="Gene3D" id="3.40.980.10">
    <property type="entry name" value="MoaB/Mog-like domain"/>
    <property type="match status" value="1"/>
</dbReference>
<dbReference type="HAMAP" id="MF_00226_B">
    <property type="entry name" value="CinA_B"/>
    <property type="match status" value="1"/>
</dbReference>
<dbReference type="InterPro" id="IPR050101">
    <property type="entry name" value="CinA"/>
</dbReference>
<dbReference type="InterPro" id="IPR036653">
    <property type="entry name" value="CinA-like_C"/>
</dbReference>
<dbReference type="InterPro" id="IPR008136">
    <property type="entry name" value="CinA_C"/>
</dbReference>
<dbReference type="InterPro" id="IPR041424">
    <property type="entry name" value="CinA_KH"/>
</dbReference>
<dbReference type="InterPro" id="IPR008135">
    <property type="entry name" value="Competence-induced_CinA"/>
</dbReference>
<dbReference type="InterPro" id="IPR036425">
    <property type="entry name" value="MoaB/Mog-like_dom_sf"/>
</dbReference>
<dbReference type="InterPro" id="IPR001453">
    <property type="entry name" value="MoaB/Mog_dom"/>
</dbReference>
<dbReference type="NCBIfam" id="TIGR00200">
    <property type="entry name" value="cinA_nterm"/>
    <property type="match status" value="1"/>
</dbReference>
<dbReference type="NCBIfam" id="TIGR00177">
    <property type="entry name" value="molyb_syn"/>
    <property type="match status" value="1"/>
</dbReference>
<dbReference type="NCBIfam" id="TIGR00199">
    <property type="entry name" value="PncC_domain"/>
    <property type="match status" value="1"/>
</dbReference>
<dbReference type="NCBIfam" id="NF001813">
    <property type="entry name" value="PRK00549.1"/>
    <property type="match status" value="1"/>
</dbReference>
<dbReference type="PANTHER" id="PTHR13939">
    <property type="entry name" value="NICOTINAMIDE-NUCLEOTIDE AMIDOHYDROLASE PNCC"/>
    <property type="match status" value="1"/>
</dbReference>
<dbReference type="PANTHER" id="PTHR13939:SF0">
    <property type="entry name" value="NMN AMIDOHYDROLASE-LIKE PROTEIN YFAY"/>
    <property type="match status" value="1"/>
</dbReference>
<dbReference type="Pfam" id="PF02464">
    <property type="entry name" value="CinA"/>
    <property type="match status" value="1"/>
</dbReference>
<dbReference type="Pfam" id="PF18146">
    <property type="entry name" value="CinA_KH"/>
    <property type="match status" value="1"/>
</dbReference>
<dbReference type="Pfam" id="PF00994">
    <property type="entry name" value="MoCF_biosynth"/>
    <property type="match status" value="1"/>
</dbReference>
<dbReference type="PIRSF" id="PIRSF006728">
    <property type="entry name" value="CinA"/>
    <property type="match status" value="1"/>
</dbReference>
<dbReference type="SMART" id="SM00852">
    <property type="entry name" value="MoCF_biosynth"/>
    <property type="match status" value="1"/>
</dbReference>
<dbReference type="SUPFAM" id="SSF142433">
    <property type="entry name" value="CinA-like"/>
    <property type="match status" value="1"/>
</dbReference>
<dbReference type="SUPFAM" id="SSF53218">
    <property type="entry name" value="Molybdenum cofactor biosynthesis proteins"/>
    <property type="match status" value="1"/>
</dbReference>
<reference key="1">
    <citation type="submission" date="2008-10" db="EMBL/GenBank/DDBJ databases">
        <title>Genome sequence of Bacillus anthracis str. CDC 684.</title>
        <authorList>
            <person name="Dodson R.J."/>
            <person name="Munk A.C."/>
            <person name="Brettin T."/>
            <person name="Bruce D."/>
            <person name="Detter C."/>
            <person name="Tapia R."/>
            <person name="Han C."/>
            <person name="Sutton G."/>
            <person name="Sims D."/>
        </authorList>
    </citation>
    <scope>NUCLEOTIDE SEQUENCE [LARGE SCALE GENOMIC DNA]</scope>
    <source>
        <strain>CDC 684 / NRRL 3495</strain>
    </source>
</reference>
<comment type="similarity">
    <text evidence="1">Belongs to the CinA family.</text>
</comment>
<protein>
    <recommendedName>
        <fullName evidence="1">Putative competence-damage inducible protein</fullName>
    </recommendedName>
</protein>
<evidence type="ECO:0000255" key="1">
    <source>
        <dbReference type="HAMAP-Rule" id="MF_00226"/>
    </source>
</evidence>
<feature type="chain" id="PRO_1000124975" description="Putative competence-damage inducible protein">
    <location>
        <begin position="1"/>
        <end position="412"/>
    </location>
</feature>
<accession>C3L7E6</accession>
<sequence length="412" mass="45310">MNAEIIAVGTELLLGQIANTNAQFLSEKLASIGINVYYHTVVGDNNKRLQQAIEVAEERADMLIFTGGLGPTKDDLTKETIASSLAEELVYDEKALASISDYFKRTGREFTENNKKQALVLDGATVFANDHGMAPGMGLNKNGKVYILLPGPPKEMKPMYVSYVEPFLRNFTTGENIYSRVLRFFGIGESQLEVKVQDLIDGQTNPTIAPLANDGEVTLRLTAKHQNVDEAEKLIQHVEDLILERVGGFFYGYDQEFLHDKAIVLLKKKGLTLACAESLTGGLFGNQVTESAGVSSVFKGGVICYHNDVKQHVLHVPEEVLFTDGAVSKECARYLAENVKELLEADIGISFTGVAGPDASEHKEPGTVFVGLAIKDEPTVVFPLNLSGSRQQIRERSAKYGFYHLYKKLEEI</sequence>
<organism>
    <name type="scientific">Bacillus anthracis (strain CDC 684 / NRRL 3495)</name>
    <dbReference type="NCBI Taxonomy" id="568206"/>
    <lineage>
        <taxon>Bacteria</taxon>
        <taxon>Bacillati</taxon>
        <taxon>Bacillota</taxon>
        <taxon>Bacilli</taxon>
        <taxon>Bacillales</taxon>
        <taxon>Bacillaceae</taxon>
        <taxon>Bacillus</taxon>
        <taxon>Bacillus cereus group</taxon>
    </lineage>
</organism>